<sequence length="181" mass="20389">MSFQEVWEKEPMKKPRIQKITVNFGVGEAGDRLTIGAKVIEELTGQSPVRTLAKQTNPAYGIRKKLPIGLKVTLRGKNAEEFLKNAFTAFKACGKVLYASSFDQVGNFSFGVPEHIDFPGQKYDPSVGIYGMDVCVTFDKAGYRVKSRKLKRSHIPKKHLVTKDEAIEYIQTKFDTEVVRE</sequence>
<name>RL5_METM5</name>
<proteinExistence type="inferred from homology"/>
<protein>
    <recommendedName>
        <fullName evidence="1">Large ribosomal subunit protein uL5</fullName>
    </recommendedName>
    <alternativeName>
        <fullName evidence="2">50S ribosomal protein L5</fullName>
    </alternativeName>
</protein>
<reference key="1">
    <citation type="submission" date="2007-03" db="EMBL/GenBank/DDBJ databases">
        <title>Complete sequence of chromosome of Methanococcus maripaludis C5.</title>
        <authorList>
            <consortium name="US DOE Joint Genome Institute"/>
            <person name="Copeland A."/>
            <person name="Lucas S."/>
            <person name="Lapidus A."/>
            <person name="Barry K."/>
            <person name="Glavina del Rio T."/>
            <person name="Dalin E."/>
            <person name="Tice H."/>
            <person name="Pitluck S."/>
            <person name="Chertkov O."/>
            <person name="Brettin T."/>
            <person name="Bruce D."/>
            <person name="Han C."/>
            <person name="Detter J.C."/>
            <person name="Schmutz J."/>
            <person name="Larimer F."/>
            <person name="Land M."/>
            <person name="Hauser L."/>
            <person name="Kyrpides N."/>
            <person name="Mikhailova N."/>
            <person name="Sieprawska-Lupa M."/>
            <person name="Whitman W.B."/>
            <person name="Richardson P."/>
        </authorList>
    </citation>
    <scope>NUCLEOTIDE SEQUENCE [LARGE SCALE GENOMIC DNA]</scope>
    <source>
        <strain>C5 / ATCC BAA-1333</strain>
    </source>
</reference>
<keyword id="KW-0687">Ribonucleoprotein</keyword>
<keyword id="KW-0689">Ribosomal protein</keyword>
<keyword id="KW-0694">RNA-binding</keyword>
<keyword id="KW-0699">rRNA-binding</keyword>
<keyword id="KW-0820">tRNA-binding</keyword>
<accession>A4FWA8</accession>
<organism>
    <name type="scientific">Methanococcus maripaludis (strain C5 / ATCC BAA-1333)</name>
    <dbReference type="NCBI Taxonomy" id="402880"/>
    <lineage>
        <taxon>Archaea</taxon>
        <taxon>Methanobacteriati</taxon>
        <taxon>Methanobacteriota</taxon>
        <taxon>Methanomada group</taxon>
        <taxon>Methanococci</taxon>
        <taxon>Methanococcales</taxon>
        <taxon>Methanococcaceae</taxon>
        <taxon>Methanococcus</taxon>
    </lineage>
</organism>
<gene>
    <name evidence="1" type="primary">rpl5</name>
    <name type="ordered locus">MmarC5_0166</name>
</gene>
<feature type="chain" id="PRO_1000052771" description="Large ribosomal subunit protein uL5">
    <location>
        <begin position="1"/>
        <end position="181"/>
    </location>
</feature>
<evidence type="ECO:0000255" key="1">
    <source>
        <dbReference type="HAMAP-Rule" id="MF_01333"/>
    </source>
</evidence>
<evidence type="ECO:0000305" key="2"/>
<comment type="function">
    <text evidence="1">This is one of the proteins that bind and probably mediate the attachment of the 5S RNA into the large ribosomal subunit, where it forms part of the central protuberance. In the 70S ribosome it contacts protein S13 of the 30S subunit (bridge B1b), connecting the 2 subunits; this bridge is implicated in subunit movement. May contact the P site tRNA; the 5S rRNA and some of its associated proteins might help stabilize positioning of ribosome-bound tRNAs.</text>
</comment>
<comment type="subunit">
    <text evidence="1">Part of the 50S ribosomal subunit; contacts the 5S rRNA and probably tRNA. Forms a bridge to the 30S subunit in the 70S ribosome.</text>
</comment>
<comment type="similarity">
    <text evidence="1">Belongs to the universal ribosomal protein uL5 family.</text>
</comment>
<dbReference type="EMBL" id="CP000609">
    <property type="protein sequence ID" value="ABO34483.1"/>
    <property type="molecule type" value="Genomic_DNA"/>
</dbReference>
<dbReference type="RefSeq" id="WP_011867942.1">
    <property type="nucleotide sequence ID" value="NC_009135.1"/>
</dbReference>
<dbReference type="SMR" id="A4FWA8"/>
<dbReference type="STRING" id="402880.MmarC5_0166"/>
<dbReference type="GeneID" id="4928309"/>
<dbReference type="KEGG" id="mmq:MmarC5_0166"/>
<dbReference type="eggNOG" id="arCOG04092">
    <property type="taxonomic scope" value="Archaea"/>
</dbReference>
<dbReference type="HOGENOM" id="CLU_061015_3_0_2"/>
<dbReference type="OrthoDB" id="372044at2157"/>
<dbReference type="Proteomes" id="UP000000253">
    <property type="component" value="Chromosome"/>
</dbReference>
<dbReference type="GO" id="GO:1990904">
    <property type="term" value="C:ribonucleoprotein complex"/>
    <property type="evidence" value="ECO:0007669"/>
    <property type="project" value="UniProtKB-KW"/>
</dbReference>
<dbReference type="GO" id="GO:0005840">
    <property type="term" value="C:ribosome"/>
    <property type="evidence" value="ECO:0007669"/>
    <property type="project" value="UniProtKB-KW"/>
</dbReference>
<dbReference type="GO" id="GO:0019843">
    <property type="term" value="F:rRNA binding"/>
    <property type="evidence" value="ECO:0007669"/>
    <property type="project" value="UniProtKB-UniRule"/>
</dbReference>
<dbReference type="GO" id="GO:0003735">
    <property type="term" value="F:structural constituent of ribosome"/>
    <property type="evidence" value="ECO:0007669"/>
    <property type="project" value="InterPro"/>
</dbReference>
<dbReference type="GO" id="GO:0000049">
    <property type="term" value="F:tRNA binding"/>
    <property type="evidence" value="ECO:0007669"/>
    <property type="project" value="UniProtKB-UniRule"/>
</dbReference>
<dbReference type="GO" id="GO:0006412">
    <property type="term" value="P:translation"/>
    <property type="evidence" value="ECO:0007669"/>
    <property type="project" value="UniProtKB-UniRule"/>
</dbReference>
<dbReference type="FunFam" id="3.30.1440.10:FF:000002">
    <property type="entry name" value="60S ribosomal protein L11"/>
    <property type="match status" value="1"/>
</dbReference>
<dbReference type="Gene3D" id="3.30.1440.10">
    <property type="match status" value="1"/>
</dbReference>
<dbReference type="HAMAP" id="MF_01333_A">
    <property type="entry name" value="Ribosomal_uL5_A"/>
    <property type="match status" value="1"/>
</dbReference>
<dbReference type="InterPro" id="IPR002132">
    <property type="entry name" value="Ribosomal_uL5"/>
</dbReference>
<dbReference type="InterPro" id="IPR022804">
    <property type="entry name" value="Ribosomal_uL5_arc"/>
</dbReference>
<dbReference type="InterPro" id="IPR031309">
    <property type="entry name" value="Ribosomal_uL5_C"/>
</dbReference>
<dbReference type="InterPro" id="IPR020929">
    <property type="entry name" value="Ribosomal_uL5_CS"/>
</dbReference>
<dbReference type="InterPro" id="IPR022803">
    <property type="entry name" value="Ribosomal_uL5_dom_sf"/>
</dbReference>
<dbReference type="InterPro" id="IPR031310">
    <property type="entry name" value="Ribosomal_uL5_N"/>
</dbReference>
<dbReference type="NCBIfam" id="NF003258">
    <property type="entry name" value="PRK04219.1"/>
    <property type="match status" value="1"/>
</dbReference>
<dbReference type="PANTHER" id="PTHR11994">
    <property type="entry name" value="60S RIBOSOMAL PROTEIN L11-RELATED"/>
    <property type="match status" value="1"/>
</dbReference>
<dbReference type="Pfam" id="PF00281">
    <property type="entry name" value="Ribosomal_L5"/>
    <property type="match status" value="1"/>
</dbReference>
<dbReference type="Pfam" id="PF00673">
    <property type="entry name" value="Ribosomal_L5_C"/>
    <property type="match status" value="1"/>
</dbReference>
<dbReference type="PIRSF" id="PIRSF002161">
    <property type="entry name" value="Ribosomal_L5"/>
    <property type="match status" value="1"/>
</dbReference>
<dbReference type="SUPFAM" id="SSF55282">
    <property type="entry name" value="RL5-like"/>
    <property type="match status" value="1"/>
</dbReference>
<dbReference type="PROSITE" id="PS00358">
    <property type="entry name" value="RIBOSOMAL_L5"/>
    <property type="match status" value="1"/>
</dbReference>